<reference key="1">
    <citation type="submission" date="2007-12" db="EMBL/GenBank/DDBJ databases">
        <title>Complete sequence of Methylobacterium extorquens PA1.</title>
        <authorList>
            <consortium name="US DOE Joint Genome Institute"/>
            <person name="Copeland A."/>
            <person name="Lucas S."/>
            <person name="Lapidus A."/>
            <person name="Barry K."/>
            <person name="Glavina del Rio T."/>
            <person name="Dalin E."/>
            <person name="Tice H."/>
            <person name="Pitluck S."/>
            <person name="Saunders E."/>
            <person name="Brettin T."/>
            <person name="Bruce D."/>
            <person name="Detter J.C."/>
            <person name="Han C."/>
            <person name="Schmutz J."/>
            <person name="Larimer F."/>
            <person name="Land M."/>
            <person name="Hauser L."/>
            <person name="Kyrpides N."/>
            <person name="Kim E."/>
            <person name="Marx C."/>
            <person name="Richardson P."/>
        </authorList>
    </citation>
    <scope>NUCLEOTIDE SEQUENCE [LARGE SCALE GENOMIC DNA]</scope>
    <source>
        <strain>PA1</strain>
    </source>
</reference>
<name>EFTS_METEP</name>
<keyword id="KW-0963">Cytoplasm</keyword>
<keyword id="KW-0251">Elongation factor</keyword>
<keyword id="KW-0648">Protein biosynthesis</keyword>
<dbReference type="EMBL" id="CP000908">
    <property type="protein sequence ID" value="ABY30470.1"/>
    <property type="molecule type" value="Genomic_DNA"/>
</dbReference>
<dbReference type="RefSeq" id="WP_003598034.1">
    <property type="nucleotide sequence ID" value="NC_010172.1"/>
</dbReference>
<dbReference type="SMR" id="A9W4G4"/>
<dbReference type="GeneID" id="72989761"/>
<dbReference type="KEGG" id="mex:Mext_2074"/>
<dbReference type="eggNOG" id="COG0264">
    <property type="taxonomic scope" value="Bacteria"/>
</dbReference>
<dbReference type="HOGENOM" id="CLU_047155_2_0_5"/>
<dbReference type="BioCyc" id="MEXT419610:MEXT_RS10470-MONOMER"/>
<dbReference type="GO" id="GO:0005737">
    <property type="term" value="C:cytoplasm"/>
    <property type="evidence" value="ECO:0007669"/>
    <property type="project" value="UniProtKB-SubCell"/>
</dbReference>
<dbReference type="GO" id="GO:0003746">
    <property type="term" value="F:translation elongation factor activity"/>
    <property type="evidence" value="ECO:0007669"/>
    <property type="project" value="UniProtKB-UniRule"/>
</dbReference>
<dbReference type="CDD" id="cd14275">
    <property type="entry name" value="UBA_EF-Ts"/>
    <property type="match status" value="1"/>
</dbReference>
<dbReference type="FunFam" id="1.10.8.10:FF:000001">
    <property type="entry name" value="Elongation factor Ts"/>
    <property type="match status" value="1"/>
</dbReference>
<dbReference type="Gene3D" id="1.10.286.20">
    <property type="match status" value="1"/>
</dbReference>
<dbReference type="Gene3D" id="1.10.8.10">
    <property type="entry name" value="DNA helicase RuvA subunit, C-terminal domain"/>
    <property type="match status" value="1"/>
</dbReference>
<dbReference type="Gene3D" id="3.30.479.20">
    <property type="entry name" value="Elongation factor Ts, dimerisation domain"/>
    <property type="match status" value="2"/>
</dbReference>
<dbReference type="HAMAP" id="MF_00050">
    <property type="entry name" value="EF_Ts"/>
    <property type="match status" value="1"/>
</dbReference>
<dbReference type="InterPro" id="IPR036402">
    <property type="entry name" value="EF-Ts_dimer_sf"/>
</dbReference>
<dbReference type="InterPro" id="IPR001816">
    <property type="entry name" value="Transl_elong_EFTs/EF1B"/>
</dbReference>
<dbReference type="InterPro" id="IPR014039">
    <property type="entry name" value="Transl_elong_EFTs/EF1B_dimer"/>
</dbReference>
<dbReference type="InterPro" id="IPR018101">
    <property type="entry name" value="Transl_elong_Ts_CS"/>
</dbReference>
<dbReference type="InterPro" id="IPR009060">
    <property type="entry name" value="UBA-like_sf"/>
</dbReference>
<dbReference type="NCBIfam" id="TIGR00116">
    <property type="entry name" value="tsf"/>
    <property type="match status" value="1"/>
</dbReference>
<dbReference type="PANTHER" id="PTHR11741">
    <property type="entry name" value="ELONGATION FACTOR TS"/>
    <property type="match status" value="1"/>
</dbReference>
<dbReference type="PANTHER" id="PTHR11741:SF0">
    <property type="entry name" value="ELONGATION FACTOR TS, MITOCHONDRIAL"/>
    <property type="match status" value="1"/>
</dbReference>
<dbReference type="Pfam" id="PF00889">
    <property type="entry name" value="EF_TS"/>
    <property type="match status" value="1"/>
</dbReference>
<dbReference type="SUPFAM" id="SSF54713">
    <property type="entry name" value="Elongation factor Ts (EF-Ts), dimerisation domain"/>
    <property type="match status" value="2"/>
</dbReference>
<dbReference type="SUPFAM" id="SSF46934">
    <property type="entry name" value="UBA-like"/>
    <property type="match status" value="1"/>
</dbReference>
<dbReference type="PROSITE" id="PS01127">
    <property type="entry name" value="EF_TS_2"/>
    <property type="match status" value="1"/>
</dbReference>
<organism>
    <name type="scientific">Methylorubrum extorquens (strain PA1)</name>
    <name type="common">Methylobacterium extorquens</name>
    <dbReference type="NCBI Taxonomy" id="419610"/>
    <lineage>
        <taxon>Bacteria</taxon>
        <taxon>Pseudomonadati</taxon>
        <taxon>Pseudomonadota</taxon>
        <taxon>Alphaproteobacteria</taxon>
        <taxon>Hyphomicrobiales</taxon>
        <taxon>Methylobacteriaceae</taxon>
        <taxon>Methylorubrum</taxon>
    </lineage>
</organism>
<gene>
    <name evidence="1" type="primary">tsf</name>
    <name type="ordered locus">Mext_2074</name>
</gene>
<comment type="function">
    <text evidence="1">Associates with the EF-Tu.GDP complex and induces the exchange of GDP to GTP. It remains bound to the aminoacyl-tRNA.EF-Tu.GTP complex up to the GTP hydrolysis stage on the ribosome.</text>
</comment>
<comment type="subcellular location">
    <subcellularLocation>
        <location evidence="1">Cytoplasm</location>
    </subcellularLocation>
</comment>
<comment type="similarity">
    <text evidence="1">Belongs to the EF-Ts family.</text>
</comment>
<protein>
    <recommendedName>
        <fullName evidence="1">Elongation factor Ts</fullName>
        <shortName evidence="1">EF-Ts</shortName>
    </recommendedName>
</protein>
<accession>A9W4G4</accession>
<sequence length="306" mass="32236">MANITAALVKELREKTGAGMMDCKGALNETNGDLEAAVDWLRKKGLAKAAKKAGRVAAEGLVAVESAGRHAAVVEVNSETDFVARNDGFQAFAREAAKLALNTDGTLEGLQAATFPGSSETVQEKLSNLIATIGENMTLRRVAKLEVSKGVIASYVHGQINEGLGKIGVLVALESEGDVEFLSTLGRQIAMHVAATNPTALDASGVDQAVVERESNILREKNAGKPDHVMAKIVESGLKSYYKEVTLLEQPFVHDGSKTVSQILKEAAGKAGGEVAIKGFVRYALGEGIEKEEGPDFAAEVASMSR</sequence>
<proteinExistence type="inferred from homology"/>
<evidence type="ECO:0000255" key="1">
    <source>
        <dbReference type="HAMAP-Rule" id="MF_00050"/>
    </source>
</evidence>
<feature type="chain" id="PRO_1000116758" description="Elongation factor Ts">
    <location>
        <begin position="1"/>
        <end position="306"/>
    </location>
</feature>
<feature type="region of interest" description="Involved in Mg(2+) ion dislocation from EF-Tu" evidence="1">
    <location>
        <begin position="80"/>
        <end position="83"/>
    </location>
</feature>